<gene>
    <name type="primary">SMC1A</name>
    <name type="synonym">DXS423E</name>
    <name type="synonym">KIAA0178</name>
    <name type="synonym">SB1.8</name>
    <name type="synonym">SMC1</name>
    <name type="synonym">SMC1L1</name>
</gene>
<organism>
    <name type="scientific">Homo sapiens</name>
    <name type="common">Human</name>
    <dbReference type="NCBI Taxonomy" id="9606"/>
    <lineage>
        <taxon>Eukaryota</taxon>
        <taxon>Metazoa</taxon>
        <taxon>Chordata</taxon>
        <taxon>Craniata</taxon>
        <taxon>Vertebrata</taxon>
        <taxon>Euteleostomi</taxon>
        <taxon>Mammalia</taxon>
        <taxon>Eutheria</taxon>
        <taxon>Euarchontoglires</taxon>
        <taxon>Primates</taxon>
        <taxon>Haplorrhini</taxon>
        <taxon>Catarrhini</taxon>
        <taxon>Hominidae</taxon>
        <taxon>Homo</taxon>
    </lineage>
</organism>
<evidence type="ECO:0000250" key="1"/>
<evidence type="ECO:0000250" key="2">
    <source>
        <dbReference type="UniProtKB" id="O97593"/>
    </source>
</evidence>
<evidence type="ECO:0000250" key="3">
    <source>
        <dbReference type="UniProtKB" id="Q9CU62"/>
    </source>
</evidence>
<evidence type="ECO:0000250" key="4">
    <source>
        <dbReference type="UniProtKB" id="Q9Z1M9"/>
    </source>
</evidence>
<evidence type="ECO:0000255" key="5"/>
<evidence type="ECO:0000256" key="6">
    <source>
        <dbReference type="SAM" id="MobiDB-lite"/>
    </source>
</evidence>
<evidence type="ECO:0000269" key="7">
    <source>
    </source>
</evidence>
<evidence type="ECO:0000269" key="8">
    <source>
    </source>
</evidence>
<evidence type="ECO:0000269" key="9">
    <source>
    </source>
</evidence>
<evidence type="ECO:0000269" key="10">
    <source>
    </source>
</evidence>
<evidence type="ECO:0000269" key="11">
    <source>
    </source>
</evidence>
<evidence type="ECO:0000269" key="12">
    <source>
    </source>
</evidence>
<evidence type="ECO:0000269" key="13">
    <source>
    </source>
</evidence>
<evidence type="ECO:0000269" key="14">
    <source>
    </source>
</evidence>
<evidence type="ECO:0000269" key="15">
    <source>
    </source>
</evidence>
<evidence type="ECO:0000269" key="16">
    <source>
    </source>
</evidence>
<evidence type="ECO:0000269" key="17">
    <source>
    </source>
</evidence>
<evidence type="ECO:0000269" key="18">
    <source>
    </source>
</evidence>
<evidence type="ECO:0000269" key="19">
    <source>
    </source>
</evidence>
<evidence type="ECO:0000269" key="20">
    <source>
    </source>
</evidence>
<evidence type="ECO:0000269" key="21">
    <source>
    </source>
</evidence>
<evidence type="ECO:0000269" key="22">
    <source>
    </source>
</evidence>
<evidence type="ECO:0000269" key="23">
    <source>
    </source>
</evidence>
<evidence type="ECO:0000269" key="24">
    <source>
    </source>
</evidence>
<evidence type="ECO:0000269" key="25">
    <source>
    </source>
</evidence>
<evidence type="ECO:0000269" key="26">
    <source>
    </source>
</evidence>
<evidence type="ECO:0000269" key="27">
    <source>
    </source>
</evidence>
<evidence type="ECO:0000305" key="28"/>
<evidence type="ECO:0007744" key="29">
    <source>
        <dbReference type="PDB" id="6WG3"/>
    </source>
</evidence>
<evidence type="ECO:0007744" key="30">
    <source>
        <dbReference type="PDB" id="6WG4"/>
    </source>
</evidence>
<evidence type="ECO:0007744" key="31">
    <source>
        <dbReference type="PDB" id="6WG6"/>
    </source>
</evidence>
<evidence type="ECO:0007744" key="32">
    <source>
        <dbReference type="PDB" id="6WGE"/>
    </source>
</evidence>
<evidence type="ECO:0007744" key="33">
    <source>
    </source>
</evidence>
<evidence type="ECO:0007744" key="34">
    <source>
    </source>
</evidence>
<evidence type="ECO:0007744" key="35">
    <source>
    </source>
</evidence>
<evidence type="ECO:0007744" key="36">
    <source>
    </source>
</evidence>
<evidence type="ECO:0007744" key="37">
    <source>
    </source>
</evidence>
<evidence type="ECO:0007744" key="38">
    <source>
    </source>
</evidence>
<evidence type="ECO:0007829" key="39">
    <source>
        <dbReference type="PDB" id="6WG4"/>
    </source>
</evidence>
<evidence type="ECO:0007829" key="40">
    <source>
        <dbReference type="PDB" id="8RO9"/>
    </source>
</evidence>
<evidence type="ECO:0007829" key="41">
    <source>
        <dbReference type="PDB" id="8ROA"/>
    </source>
</evidence>
<evidence type="ECO:0007829" key="42">
    <source>
        <dbReference type="PDB" id="8ROE"/>
    </source>
</evidence>
<evidence type="ECO:0007829" key="43">
    <source>
        <dbReference type="PDB" id="8ROF"/>
    </source>
</evidence>
<accession>Q14683</accession>
<accession>O14995</accession>
<accession>Q16351</accession>
<accession>Q2M228</accession>
<proteinExistence type="evidence at protein level"/>
<protein>
    <recommendedName>
        <fullName>Structural maintenance of chromosomes protein 1A</fullName>
        <shortName>SMC protein 1A</shortName>
        <shortName>SMC-1-alpha</shortName>
        <shortName>SMC-1A</shortName>
    </recommendedName>
    <alternativeName>
        <fullName>Sb1.8</fullName>
    </alternativeName>
</protein>
<feature type="chain" id="PRO_0000118989" description="Structural maintenance of chromosomes protein 1A">
    <location>
        <begin position="1"/>
        <end position="1233"/>
    </location>
</feature>
<feature type="domain" description="SMC hinge">
    <location>
        <begin position="515"/>
        <end position="629"/>
    </location>
</feature>
<feature type="region of interest" description="Disordered" evidence="6">
    <location>
        <begin position="284"/>
        <end position="308"/>
    </location>
</feature>
<feature type="region of interest" description="Disordered" evidence="6">
    <location>
        <begin position="348"/>
        <end position="369"/>
    </location>
</feature>
<feature type="region of interest" description="Disordered" evidence="6">
    <location>
        <begin position="947"/>
        <end position="966"/>
    </location>
</feature>
<feature type="coiled-coil region" evidence="5">
    <location>
        <begin position="104"/>
        <end position="124"/>
    </location>
</feature>
<feature type="coiled-coil region" evidence="5">
    <location>
        <begin position="163"/>
        <end position="503"/>
    </location>
</feature>
<feature type="coiled-coil region" evidence="5">
    <location>
        <begin position="660"/>
        <end position="935"/>
    </location>
</feature>
<feature type="coiled-coil region" evidence="5">
    <location>
        <begin position="991"/>
        <end position="1068"/>
    </location>
</feature>
<feature type="compositionally biased region" description="Basic and acidic residues" evidence="6">
    <location>
        <begin position="284"/>
        <end position="293"/>
    </location>
</feature>
<feature type="compositionally biased region" description="Low complexity" evidence="6">
    <location>
        <begin position="953"/>
        <end position="966"/>
    </location>
</feature>
<feature type="binding site" evidence="5">
    <location>
        <begin position="32"/>
        <end position="39"/>
    </location>
    <ligand>
        <name>ATP</name>
        <dbReference type="ChEBI" id="CHEBI:30616"/>
    </ligand>
</feature>
<feature type="modified residue" description="Phosphoserine" evidence="33">
    <location>
        <position position="358"/>
    </location>
</feature>
<feature type="modified residue" description="Phosphoserine" evidence="33 34 37 38">
    <location>
        <position position="360"/>
    </location>
</feature>
<feature type="modified residue" description="N6-acetyllysine" evidence="35">
    <location>
        <position position="648"/>
    </location>
</feature>
<feature type="modified residue" description="N6-acetyllysine" evidence="35">
    <location>
        <position position="713"/>
    </location>
</feature>
<feature type="modified residue" description="Phosphoserine; by ATM" evidence="9 34 36 37 38">
    <location>
        <position position="957"/>
    </location>
</feature>
<feature type="modified residue" description="Phosphoserine" evidence="38">
    <location>
        <position position="962"/>
    </location>
</feature>
<feature type="modified residue" description="Phosphoserine; by ATM and ATR" evidence="9 11 21 33 37">
    <location>
        <position position="966"/>
    </location>
</feature>
<feature type="modified residue" description="Phosphoserine" evidence="34">
    <location>
        <position position="970"/>
    </location>
</feature>
<feature type="modified residue" description="N6-acetyllysine" evidence="3">
    <location>
        <position position="1037"/>
    </location>
</feature>
<feature type="sequence variant" id="VAR_052438" description="In dbSNP:rs34530151.">
    <original>T</original>
    <variation>P</variation>
    <location>
        <position position="28"/>
    </location>
</feature>
<feature type="sequence variant" id="VAR_062785" description="In CDLS2." evidence="15 17 22">
    <location>
        <begin position="58"/>
        <end position="62"/>
    </location>
</feature>
<feature type="sequence variant" id="VAR_062786" description="In CDLS2; dbSNP:rs2075725792." evidence="15 17">
    <original>F</original>
    <variation>V</variation>
    <location>
        <position position="133"/>
    </location>
</feature>
<feature type="sequence variant" id="VAR_062787" description="In CDLS2; dbSNP:rs587784420." evidence="17">
    <original>E</original>
    <variation>K</variation>
    <location>
        <position position="141"/>
    </location>
</feature>
<feature type="sequence variant" id="VAR_083971" description="In DEE85." evidence="23">
    <location>
        <begin position="171"/>
        <end position="1233"/>
    </location>
</feature>
<feature type="sequence variant" id="VAR_062788" description="In CDLS2; dbSNP:rs1556890815." evidence="14 15 17 18">
    <original>R</original>
    <variation>H</variation>
    <location>
        <position position="196"/>
    </location>
</feature>
<feature type="sequence variant" id="VAR_062789" description="In CDLS2; dbSNP:rs727503773." evidence="17 18">
    <location>
        <position position="268"/>
    </location>
</feature>
<feature type="sequence variant" id="VAR_062790" description="In CDLS2." evidence="17">
    <location>
        <position position="306"/>
    </location>
</feature>
<feature type="sequence variant" id="VAR_078274" description="In CDLS2." evidence="22">
    <original>R</original>
    <variation>G</variation>
    <location>
        <position position="398"/>
    </location>
</feature>
<feature type="sequence variant" id="VAR_062791" description="In CDLS2; dbSNP:rs587784403." evidence="17">
    <original>R</original>
    <variation>Q</variation>
    <location>
        <position position="398"/>
    </location>
</feature>
<feature type="sequence variant" id="VAR_026529" description="In CDLS2; affects the affinity of SMC hinge dimers for DNA; mutated hinge dimers bind DNA with higher affinity than wild-type proteins; dbSNP:rs122454122." evidence="13 16">
    <original>E</original>
    <variation>A</variation>
    <location>
        <position position="493"/>
    </location>
</feature>
<feature type="sequence variant" id="VAR_062792" description="In CDLS2; affects the affinity of SMC hinge dimers for DNA; mutated hinge dimers bind DNA with higher affinity than wild-type proteins; dbSNP:rs2075701790." evidence="15 16 17">
    <original>R</original>
    <variation>C</variation>
    <location>
        <position position="496"/>
    </location>
</feature>
<feature type="sequence variant" id="VAR_062793" description="In CDLS2; affects the affinity of SMC hinge dimers for DNA; mutated hinge dimers bind DNA with higher affinity than wild-type proteins; dbSNP:rs122454123." evidence="15 16 17">
    <original>R</original>
    <variation>H</variation>
    <location>
        <position position="496"/>
    </location>
</feature>
<feature type="sequence variant" id="VAR_083972" description="In DEE85." evidence="24">
    <location>
        <begin position="499"/>
        <end position="1233"/>
    </location>
</feature>
<feature type="sequence variant" id="VAR_083973" description="In DEE85." evidence="23">
    <location>
        <begin position="531"/>
        <end position="1233"/>
    </location>
</feature>
<feature type="sequence variant" id="VAR_078275" description="In CDLS2; uncertain significance." evidence="22">
    <original>V</original>
    <variation>M</variation>
    <location>
        <position position="651"/>
    </location>
</feature>
<feature type="sequence variant" id="VAR_062794" description="In CDLS2." evidence="17">
    <location>
        <position position="683"/>
    </location>
</feature>
<feature type="sequence variant" id="VAR_062795" description="In CDLS2." evidence="17">
    <original>R</original>
    <variation>G</variation>
    <location>
        <position position="693"/>
    </location>
</feature>
<feature type="sequence variant" id="VAR_078276" description="In CDLS2; dbSNP:rs587784408." evidence="22">
    <original>R</original>
    <variation>Q</variation>
    <location>
        <position position="693"/>
    </location>
</feature>
<feature type="sequence variant" id="VAR_064542" description="In CDLS2; dbSNP:rs782176647." evidence="18">
    <original>R</original>
    <variation>Q</variation>
    <location>
        <position position="711"/>
    </location>
</feature>
<feature type="sequence variant" id="VAR_062796" description="In CDLS2; dbSNP:rs587784409." evidence="15 17">
    <original>R</original>
    <variation>W</variation>
    <location>
        <position position="711"/>
    </location>
</feature>
<feature type="sequence variant" id="VAR_083974" description="In DEE85." evidence="23">
    <location>
        <begin position="733"/>
        <end position="1233"/>
    </location>
</feature>
<feature type="sequence variant" id="VAR_062797" description="In CDLS2." evidence="17">
    <original>C</original>
    <variation>F</variation>
    <location>
        <position position="781"/>
    </location>
</feature>
<feature type="sequence variant" id="VAR_064543" description="In CDLS2; dbSNP:rs387906702." evidence="19 22">
    <original>I</original>
    <variation>T</variation>
    <location>
        <position position="784"/>
    </location>
</feature>
<feature type="sequence variant" id="VAR_062798" description="In CDLS2; dbSNP:rs797045993." evidence="15 17 22">
    <original>R</original>
    <variation>Q</variation>
    <location>
        <position position="790"/>
    </location>
</feature>
<feature type="sequence variant" id="VAR_062799" description="In CDLS2." evidence="17">
    <original>R</original>
    <variation>G</variation>
    <location>
        <position position="816"/>
    </location>
</feature>
<feature type="sequence variant" id="VAR_026530" description="In CDLS2." evidence="13">
    <location>
        <position position="832"/>
    </location>
</feature>
<feature type="sequence variant" id="VAR_083975" description="In DEE85; dbSNP:rs2075651835." evidence="24">
    <original>R</original>
    <variation>G</variation>
    <location>
        <position position="895"/>
    </location>
</feature>
<feature type="sequence variant" id="VAR_083976" description="In DEE85." evidence="23">
    <location>
        <begin position="975"/>
        <end position="1233"/>
    </location>
</feature>
<feature type="sequence variant" id="VAR_083977" description="In DEE85." evidence="23">
    <location>
        <begin position="1039"/>
        <end position="1233"/>
    </location>
</feature>
<feature type="sequence variant" id="VAR_083978" description="In DEE85." evidence="23">
    <location>
        <begin position="1049"/>
        <end position="1233"/>
    </location>
</feature>
<feature type="sequence variant" id="VAR_062800" description="In CDLS2; dbSNP:rs587784416." evidence="17">
    <original>R</original>
    <variation>Q</variation>
    <location>
        <position position="1049"/>
    </location>
</feature>
<feature type="sequence variant" id="VAR_062801" description="In CDLS2; dbSNP:rs587784418." evidence="14">
    <original>Y</original>
    <variation>C</variation>
    <location>
        <position position="1085"/>
    </location>
</feature>
<feature type="sequence variant" id="VAR_062802" description="In CDLS2." evidence="15 17">
    <original>F</original>
    <variation>L</variation>
    <location>
        <position position="1122"/>
    </location>
</feature>
<feature type="sequence variant" id="VAR_062803" description="In CDLS2; dbSNP:rs2146582432." evidence="17">
    <original>R</original>
    <variation>W</variation>
    <location>
        <position position="1123"/>
    </location>
</feature>
<feature type="sequence variant" id="VAR_078277" description="In CDLS2; uncertain significance; dbSNP:rs1556885810." evidence="22">
    <original>N</original>
    <variation>T</variation>
    <location>
        <position position="1166"/>
    </location>
</feature>
<feature type="sequence variant" id="VAR_078278" description="In CDLS2; uncertain significance." evidence="22">
    <original>L</original>
    <variation>F</variation>
    <location>
        <position position="1189"/>
    </location>
</feature>
<feature type="mutagenesis site" description="Reduces phosphorylation and the S-phase checkpoint activation. Abolishes S-phase activation; when associated with A-966." evidence="9">
    <original>S</original>
    <variation>A</variation>
    <location>
        <position position="957"/>
    </location>
</feature>
<feature type="mutagenesis site" description="Reduces phosphorylation and the S-phase checkpoint activation. Increases sensitivity to DNA methylation. Abolishes S-phase activation; when associated with A-957." evidence="9 11">
    <original>S</original>
    <variation>A</variation>
    <location>
        <position position="966"/>
    </location>
</feature>
<feature type="sequence conflict" description="In Ref. 1; AAB34405." evidence="28" ref="1">
    <original>EL</original>
    <variation>DV</variation>
    <location>
        <begin position="163"/>
        <end position="164"/>
    </location>
</feature>
<feature type="strand" evidence="42">
    <location>
        <begin position="3"/>
        <end position="12"/>
    </location>
</feature>
<feature type="strand" evidence="42">
    <location>
        <begin position="15"/>
        <end position="21"/>
    </location>
</feature>
<feature type="strand" evidence="42">
    <location>
        <begin position="26"/>
        <end position="31"/>
    </location>
</feature>
<feature type="strand" evidence="40">
    <location>
        <begin position="33"/>
        <end position="36"/>
    </location>
</feature>
<feature type="helix" evidence="42">
    <location>
        <begin position="38"/>
        <end position="48"/>
    </location>
</feature>
<feature type="helix" evidence="42">
    <location>
        <begin position="53"/>
        <end position="56"/>
    </location>
</feature>
<feature type="helix" evidence="42">
    <location>
        <begin position="61"/>
        <end position="64"/>
    </location>
</feature>
<feature type="helix" evidence="42">
    <location>
        <begin position="68"/>
        <end position="70"/>
    </location>
</feature>
<feature type="strand" evidence="42">
    <location>
        <begin position="76"/>
        <end position="85"/>
    </location>
</feature>
<feature type="strand" evidence="42">
    <location>
        <begin position="92"/>
        <end position="99"/>
    </location>
</feature>
<feature type="strand" evidence="42">
    <location>
        <begin position="102"/>
        <end position="107"/>
    </location>
</feature>
<feature type="strand" evidence="42">
    <location>
        <begin position="110"/>
        <end position="112"/>
    </location>
</feature>
<feature type="helix" evidence="42">
    <location>
        <begin position="114"/>
        <end position="123"/>
    </location>
</feature>
<feature type="turn" evidence="42">
    <location>
        <begin position="128"/>
        <end position="130"/>
    </location>
</feature>
<feature type="helix" evidence="42">
    <location>
        <begin position="140"/>
        <end position="145"/>
    </location>
</feature>
<feature type="helix" evidence="42">
    <location>
        <begin position="148"/>
        <end position="159"/>
    </location>
</feature>
<feature type="helix" evidence="42">
    <location>
        <begin position="161"/>
        <end position="164"/>
    </location>
</feature>
<feature type="helix" evidence="42">
    <location>
        <begin position="165"/>
        <end position="174"/>
    </location>
</feature>
<feature type="helix" evidence="39">
    <location>
        <begin position="500"/>
        <end position="510"/>
    </location>
</feature>
<feature type="turn" evidence="39">
    <location>
        <begin position="512"/>
        <end position="514"/>
    </location>
</feature>
<feature type="strand" evidence="39">
    <location>
        <begin position="515"/>
        <end position="518"/>
    </location>
</feature>
<feature type="helix" evidence="39">
    <location>
        <begin position="519"/>
        <end position="522"/>
    </location>
</feature>
<feature type="strand" evidence="39">
    <location>
        <begin position="523"/>
        <end position="527"/>
    </location>
</feature>
<feature type="helix" evidence="39">
    <location>
        <begin position="528"/>
        <end position="530"/>
    </location>
</feature>
<feature type="helix" evidence="39">
    <location>
        <begin position="531"/>
        <end position="538"/>
    </location>
</feature>
<feature type="helix" evidence="39">
    <location>
        <begin position="539"/>
        <end position="543"/>
    </location>
</feature>
<feature type="strand" evidence="39">
    <location>
        <begin position="545"/>
        <end position="548"/>
    </location>
</feature>
<feature type="helix" evidence="39">
    <location>
        <begin position="550"/>
        <end position="562"/>
    </location>
</feature>
<feature type="strand" evidence="39">
    <location>
        <begin position="570"/>
        <end position="572"/>
    </location>
</feature>
<feature type="helix" evidence="39">
    <location>
        <begin position="583"/>
        <end position="587"/>
    </location>
</feature>
<feature type="strand" evidence="39">
    <location>
        <begin position="591"/>
        <end position="594"/>
    </location>
</feature>
<feature type="helix" evidence="39">
    <location>
        <begin position="595"/>
        <end position="597"/>
    </location>
</feature>
<feature type="strand" evidence="39">
    <location>
        <begin position="598"/>
        <end position="602"/>
    </location>
</feature>
<feature type="helix" evidence="39">
    <location>
        <begin position="603"/>
        <end position="605"/>
    </location>
</feature>
<feature type="helix" evidence="39">
    <location>
        <begin position="606"/>
        <end position="613"/>
    </location>
</feature>
<feature type="strand" evidence="39">
    <location>
        <begin position="617"/>
        <end position="621"/>
    </location>
</feature>
<feature type="helix" evidence="39">
    <location>
        <begin position="622"/>
        <end position="630"/>
    </location>
</feature>
<feature type="strand" evidence="39">
    <location>
        <begin position="631"/>
        <end position="634"/>
    </location>
</feature>
<feature type="strand" evidence="39">
    <location>
        <begin position="652"/>
        <end position="654"/>
    </location>
</feature>
<feature type="helix" evidence="39">
    <location>
        <begin position="656"/>
        <end position="663"/>
    </location>
</feature>
<feature type="helix" evidence="39">
    <location>
        <begin position="665"/>
        <end position="668"/>
    </location>
</feature>
<feature type="strand" evidence="40">
    <location>
        <begin position="879"/>
        <end position="884"/>
    </location>
</feature>
<feature type="helix" evidence="40">
    <location>
        <begin position="889"/>
        <end position="897"/>
    </location>
</feature>
<feature type="turn" evidence="40">
    <location>
        <begin position="902"/>
        <end position="907"/>
    </location>
</feature>
<feature type="helix" evidence="40">
    <location>
        <begin position="914"/>
        <end position="919"/>
    </location>
</feature>
<feature type="helix" evidence="40">
    <location>
        <begin position="923"/>
        <end position="931"/>
    </location>
</feature>
<feature type="helix" evidence="41">
    <location>
        <begin position="937"/>
        <end position="939"/>
    </location>
</feature>
<feature type="helix" evidence="40">
    <location>
        <begin position="941"/>
        <end position="944"/>
    </location>
</feature>
<feature type="helix" evidence="40">
    <location>
        <begin position="945"/>
        <end position="961"/>
    </location>
</feature>
<feature type="helix" evidence="42">
    <location>
        <begin position="1057"/>
        <end position="1089"/>
    </location>
</feature>
<feature type="strand" evidence="43">
    <location>
        <begin position="1091"/>
        <end position="1093"/>
    </location>
</feature>
<feature type="strand" evidence="42">
    <location>
        <begin position="1095"/>
        <end position="1105"/>
    </location>
</feature>
<feature type="helix" evidence="42">
    <location>
        <begin position="1106"/>
        <end position="1108"/>
    </location>
</feature>
<feature type="strand" evidence="42">
    <location>
        <begin position="1111"/>
        <end position="1116"/>
    </location>
</feature>
<feature type="strand" evidence="40">
    <location>
        <begin position="1122"/>
        <end position="1124"/>
    </location>
</feature>
<feature type="strand" evidence="42">
    <location>
        <begin position="1125"/>
        <end position="1128"/>
    </location>
</feature>
<feature type="helix" evidence="42">
    <location>
        <begin position="1130"/>
        <end position="1147"/>
    </location>
</feature>
<feature type="strand" evidence="42">
    <location>
        <begin position="1151"/>
        <end position="1157"/>
    </location>
</feature>
<feature type="turn" evidence="42">
    <location>
        <begin position="1158"/>
        <end position="1161"/>
    </location>
</feature>
<feature type="helix" evidence="42">
    <location>
        <begin position="1164"/>
        <end position="1175"/>
    </location>
</feature>
<feature type="turn" evidence="43">
    <location>
        <begin position="1179"/>
        <end position="1181"/>
    </location>
</feature>
<feature type="strand" evidence="42">
    <location>
        <begin position="1183"/>
        <end position="1187"/>
    </location>
</feature>
<feature type="helix" evidence="42">
    <location>
        <begin position="1191"/>
        <end position="1194"/>
    </location>
</feature>
<feature type="strand" evidence="42">
    <location>
        <begin position="1197"/>
        <end position="1206"/>
    </location>
</feature>
<feature type="strand" evidence="42">
    <location>
        <begin position="1208"/>
        <end position="1210"/>
    </location>
</feature>
<feature type="strand" evidence="42">
    <location>
        <begin position="1212"/>
        <end position="1219"/>
    </location>
</feature>
<feature type="helix" evidence="42">
    <location>
        <begin position="1220"/>
        <end position="1222"/>
    </location>
</feature>
<comment type="function">
    <text evidence="9">Involved in chromosome cohesion during cell cycle and in DNA repair. Central component of cohesin complex. The cohesin complex is required for the cohesion of sister chromatids after DNA replication. The cohesin complex apparently forms a large proteinaceous ring within which sister chromatids can be trapped. At anaphase, the complex is cleaved and dissociates from chromatin, allowing sister chromatids to segregate. The cohesin complex may also play a role in spindle pole assembly during mitosis. Involved in DNA repair via its interaction with BRCA1 and its related phosphorylation by ATM, or via its phosphorylation by ATR. Works as a downstream effector both in the ATM/NBS1 branch and in the ATR/MSH2 branch of S-phase checkpoint.</text>
</comment>
<comment type="subunit">
    <text evidence="2 3 4 7 8 9 12 20 21 26 27">Forms a heterodimer with SMC3 in cohesin complexes (PubMed:22628566). Cohesin complexes are composed of the SMC1 (SMC1A or SMC1B) and SMC3 heterodimer attached via their SMC hinge domain, RAD21 which link them, and one STAG protein (STAG1, STAG2 or STAG3), which interacts with RAD21 (PubMed:11076961, PubMed:22628566, PubMed:32409525). In germ cell cohesin complexes, SMC1A is mutually exclusive with SMC1B (By similarity). Interacts with BRCA1 (PubMed:11877377). Found in a complex with CDCA5, SMC3 and RAD21, PDS5A/SCC-112 and PDS5B/APRIN (PubMed:15837422). Interacts with NDC80 (PubMed:10409732, PubMed:9295362). Interacts with BRAT1 (PubMed:22977523). Found in a complex containing POLE and SMC3. Interacts with RPGR, STAG3 and SYCP2 (By similarity). The cohesin complex interacts with the cohesin loading complex subunits NIPBL/Scc2 (via HEAT repeats) and MAU2/Scc4 (PubMed:22628566). NIPBL directly contacts all members of the complex, RAD21, SMC1A/B, SMC3 and STAG1 (PubMed:22628566, PubMed:32409525).</text>
</comment>
<comment type="interaction">
    <interactant intactId="EBI-80690">
        <id>Q14683</id>
    </interactant>
    <interactant intactId="EBI-718805">
        <id>Q96FF9</id>
        <label>CDCA5</label>
    </interactant>
    <organismsDiffer>false</organismsDiffer>
    <experiments>8</experiments>
</comment>
<comment type="interaction">
    <interactant intactId="EBI-80690">
        <id>Q14683</id>
    </interactant>
    <interactant intactId="EBI-12836320">
        <id>Q92915-2</id>
        <label>FGF14</label>
    </interactant>
    <organismsDiffer>false</organismsDiffer>
    <experiments>3</experiments>
</comment>
<comment type="interaction">
    <interactant intactId="EBI-80690">
        <id>Q14683</id>
    </interactant>
    <interactant intactId="EBI-355924">
        <id>P33993</id>
        <label>MCM7</label>
    </interactant>
    <organismsDiffer>false</organismsDiffer>
    <experiments>8</experiments>
</comment>
<comment type="interaction">
    <interactant intactId="EBI-80690">
        <id>Q14683</id>
    </interactant>
    <interactant intactId="EBI-80739">
        <id>O60216</id>
        <label>RAD21</label>
    </interactant>
    <organismsDiffer>false</organismsDiffer>
    <experiments>18</experiments>
</comment>
<comment type="interaction">
    <interactant intactId="EBI-80690">
        <id>Q14683</id>
    </interactant>
    <interactant intactId="EBI-724495">
        <id>P78406</id>
        <label>RAE1</label>
    </interactant>
    <organismsDiffer>false</organismsDiffer>
    <experiments>5</experiments>
</comment>
<comment type="interaction">
    <interactant intactId="EBI-80690">
        <id>Q14683</id>
    </interactant>
    <interactant intactId="EBI-989069">
        <id>Q5FBB7</id>
        <label>SGO1</label>
    </interactant>
    <organismsDiffer>false</organismsDiffer>
    <experiments>9</experiments>
</comment>
<comment type="interaction">
    <interactant intactId="EBI-80690">
        <id>Q14683</id>
    </interactant>
    <interactant intactId="EBI-80718">
        <id>Q9UQE7</id>
        <label>SMC3</label>
    </interactant>
    <organismsDiffer>false</organismsDiffer>
    <experiments>15</experiments>
</comment>
<comment type="interaction">
    <interactant intactId="EBI-80690">
        <id>Q14683</id>
    </interactant>
    <interactant intactId="EBI-1057252">
        <id>Q8N3U4</id>
        <label>STAG2</label>
    </interactant>
    <organismsDiffer>false</organismsDiffer>
    <experiments>14</experiments>
</comment>
<comment type="interaction">
    <interactant intactId="EBI-80690">
        <id>Q14683</id>
    </interactant>
    <interactant intactId="EBI-6927928">
        <id>PRO_0000045603</id>
        <dbReference type="UniProtKB" id="Q99IB8"/>
    </interactant>
    <organismsDiffer>true</organismsDiffer>
    <experiments>3</experiments>
</comment>
<comment type="subcellular location">
    <subcellularLocation>
        <location evidence="10">Nucleus</location>
    </subcellularLocation>
    <subcellularLocation>
        <location evidence="10">Chromosome</location>
    </subcellularLocation>
    <subcellularLocation>
        <location evidence="10">Chromosome</location>
        <location evidence="10">Centromere</location>
        <location evidence="10">Kinetochore</location>
    </subcellularLocation>
    <text>Associates with chromatin. Before prophase it is scattered along chromosome arms. During prophase, most of cohesin complexes dissociate from chromatin probably because of phosphorylation by PLK, except at centromeres, where cohesin complexes remain. At anaphase, the RAD21 subunit of the cohesin complex is cleaved, leading to the dissociation of the complex from chromosomes, allowing chromosome separation. In germ cells, cohesin complex dissociates from chromatin at prophase I, and may be replaced by a meiosis-specific cohesin complex. The phosphorylated form on Ser-957 and Ser-966 associates with chromatin during G1/S/G2 phases but not during M phase, suggesting that phosphorylation does not regulate cohesin function. Integral component of the functional centromere-kinetochore complex at the kinetochore region during mitosis.</text>
</comment>
<comment type="domain">
    <text evidence="1">The flexible SMC hinge domain, which separates the large intramolecular coiled coil regions, allows the heterotypic interaction with the corresponding domain of SMC3, forming a V-shaped heterodimer. The two heads of the heterodimer are then connected by different ends of the cleavable RAD21 protein, forming a ring structure (By similarity).</text>
</comment>
<comment type="PTM">
    <text evidence="25">Ubiquitinated by the DCX(DCAF15) complex, leading to its degradation.</text>
</comment>
<comment type="PTM">
    <text evidence="9 11">Phosphorylated by ATM upon ionizing radiation in a NBS1-dependent manner. Phosphorylated by ATR upon DNA methylation in a MSH2/MSH6-dependent manner. Phosphorylation of Ser-957 and Ser-966 activates it and is required for S-phase checkpoint activation.</text>
</comment>
<comment type="disease" evidence="13 14 15 16 17 18 19 22">
    <disease id="DI-00380">
        <name>Cornelia de Lange syndrome 2</name>
        <acronym>CDLS2</acronym>
        <description>A form of Cornelia de Lange syndrome, a clinically heterogeneous developmental disorder associated with malformations affecting multiple systems. Characterized by facial dysmorphisms, abnormal hands and feet, growth delay, cognitive retardation, hirsutism, gastroesophageal dysfunction and cardiac, ophthalmologic and genitourinary anomalies.</description>
        <dbReference type="MIM" id="300590"/>
    </disease>
    <text>The disease is caused by variants affecting the gene represented in this entry.</text>
</comment>
<comment type="disease" evidence="23 24">
    <disease id="DI-05802">
        <name>Developmental and epileptic encephalopathy 85 with or without midline brain defects</name>
        <acronym>DEE85</acronym>
        <description>An X-linked form of epileptic encephalopathy, a heterogeneous group of severe early-onset epilepsies characterized by refractory seizures, neurodevelopmental impairment, and poor prognosis. Development is normal prior to seizure onset, after which cognitive and motor delays become apparent. DEE85 is characterized by onset of severe refractory seizures in the first year of life, global developmental delay with impaired intellectual development and poor or absent speech, and dysmorphic facial features. Many patients have midline brain defects on brain imaging.</description>
        <dbReference type="MIM" id="301044"/>
    </disease>
    <text>The disease is caused by variants affecting the gene represented in this entry.</text>
</comment>
<comment type="miscellaneous">
    <text>Mutated Cornelia de Lange cell lines display genomic instability and sensitivity to ionizing radiation and interstrand cross-linking agents.</text>
</comment>
<comment type="similarity">
    <text evidence="28">Belongs to the SMC family. SMC1 subfamily.</text>
</comment>
<sequence length="1233" mass="143233">MGFLKLIEIENFKSYKGRQIIGPFQRFTAIIGPNGSGKSNLMDAISFVLGEKTSNLRVKTLRDLIHGAPVGKPAANRAFVSMVYSEEGAEDRTFARVIVGGSSEYKINNKVVQLHEYSEELEKLGILIKARNFLVFQGAVESIAMKNPKERTALFEEISRSGELAQEYDKRKKEMVKAEEDTQFNYHRKKNIAAERKEAKQEKEEADRYQRLKDEVVRAQVQLQLFKLYHNEVEIEKLNKELASKNKEIEKDKKRMDKVEDELKEKKKELGKMMREQQQIEKEIKEKDSELNQKRPQYIKAKENTSHKIKKLEAAKKSLQNAQKHYKKRKGDMDELEKEMLSVEKARQEFEERMEEESQSQGRDLTLEENQVKKYHRLKEEASKRAATLAQELEKFNRDQKADQDRLDLEERKKVETEAKIKQKLREIEENQKRIEKLEEYITTSKQSLEEQKKLEGELTEEVEMAKRRIDEINKELNQVMEQLGDARIDRQESSRQQRKAEIMESIKRLYPGSVYGRLIDLCQPTQKKYQIAVTKVLGKNMDAIIVDSEKTGRDCIQYIKEQRGEPETFLPLDYLEVKPTDEKLRELKGAKLVIDVIRYEPPHIKKALQYACGNALVCDNVEDARRIAFGGHQRHKTVALDGTLFQKSGVISGGASDLKAKARRWDEKAVDKLKEKKERLTEELKEQMKAKRKEAELRQVQSQAHGLQMRLKYSQSDLEQTKTRHLALNLQEKSKLESELANFGPRINDIKRIIQSREREMKDLKEKMNQVEDEVFEEFCREIGVRNIREFEEEKVKRQNEIAKKRLEFENQKTRLGIQLDFEKNQLKEDQDKVHMWEQTVKKDENEIEKLKKEEQRHMKIIDETMAQLQDLKNQHLAKKSEVNDKNHEMEEIRKKLGGANKEMTHLQKEVTAIETKLEQKRSDRHNLLQACKMQDIKLPLSKGTMDDISQEEGSSQGEDSVSGSQRISSIYAREALIEIDYGDLCEDLKDAQAEEEIKQEMNTLQQKLNEQQSVLQRIAAPNMKAMEKLESVRDKFQETSDEFEAARKRAKKAKQAFEQIKKERFDRFNACFESVATNIDEIYKALSRNSSAQAFLGPENPEEPYLDGINYNCVAPGKRFRPMDNLSGGEKTVAALALLFAIHSYKPAPFFVLDEIDAALDNTNIGKVANYIKEQSTCNFQAIVISLKEEFYTKAESLIGVYPEQGDCVISKVLTFDLTKYPDANPNPNEQ</sequence>
<name>SMC1A_HUMAN</name>
<dbReference type="EMBL" id="S78271">
    <property type="protein sequence ID" value="AAB34405.1"/>
    <property type="molecule type" value="mRNA"/>
</dbReference>
<dbReference type="EMBL" id="D80000">
    <property type="protein sequence ID" value="BAA11495.2"/>
    <property type="molecule type" value="mRNA"/>
</dbReference>
<dbReference type="EMBL" id="AL161779">
    <property type="protein sequence ID" value="CAI42089.1"/>
    <property type="molecule type" value="Genomic_DNA"/>
</dbReference>
<dbReference type="EMBL" id="Z97054">
    <property type="protein sequence ID" value="CAI42089.1"/>
    <property type="status" value="JOINED"/>
    <property type="molecule type" value="Genomic_DNA"/>
</dbReference>
<dbReference type="EMBL" id="Z97054">
    <property type="protein sequence ID" value="CAI42646.1"/>
    <property type="molecule type" value="Genomic_DNA"/>
</dbReference>
<dbReference type="EMBL" id="AL161779">
    <property type="protein sequence ID" value="CAI42646.1"/>
    <property type="status" value="JOINED"/>
    <property type="molecule type" value="Genomic_DNA"/>
</dbReference>
<dbReference type="EMBL" id="BC112127">
    <property type="protein sequence ID" value="AAI12128.1"/>
    <property type="molecule type" value="mRNA"/>
</dbReference>
<dbReference type="CCDS" id="CCDS14352.1"/>
<dbReference type="PIR" id="I54383">
    <property type="entry name" value="I54383"/>
</dbReference>
<dbReference type="RefSeq" id="NP_006297.2">
    <property type="nucleotide sequence ID" value="NM_006306.3"/>
</dbReference>
<dbReference type="PDB" id="6WG3">
    <property type="method" value="EM"/>
    <property type="resolution" value="5.30 A"/>
    <property type="chains" value="A=1-1233"/>
</dbReference>
<dbReference type="PDB" id="6WG4">
    <property type="method" value="X-ray"/>
    <property type="resolution" value="2.31 A"/>
    <property type="chains" value="A=499-675"/>
</dbReference>
<dbReference type="PDB" id="6WG6">
    <property type="method" value="X-ray"/>
    <property type="resolution" value="3.54 A"/>
    <property type="chains" value="A/C/E/G/I/K=472-702"/>
</dbReference>
<dbReference type="PDB" id="6WGE">
    <property type="method" value="EM"/>
    <property type="resolution" value="3.90 A"/>
    <property type="chains" value="A=1-1233"/>
</dbReference>
<dbReference type="PDB" id="7W1M">
    <property type="method" value="EM"/>
    <property type="resolution" value="6.50 A"/>
    <property type="chains" value="A=1-1233"/>
</dbReference>
<dbReference type="PDB" id="8P0A">
    <property type="method" value="EM"/>
    <property type="resolution" value="3.67 A"/>
    <property type="chains" value="A=1-200, A=992-1233"/>
</dbReference>
<dbReference type="PDB" id="8PQ5">
    <property type="method" value="EM"/>
    <property type="resolution" value="4.40 A"/>
    <property type="chains" value="A=879-1233"/>
</dbReference>
<dbReference type="PDB" id="8RO6">
    <property type="method" value="X-ray"/>
    <property type="resolution" value="2.20 A"/>
    <property type="chains" value="A=879-1233"/>
</dbReference>
<dbReference type="PDB" id="8RO7">
    <property type="method" value="X-ray"/>
    <property type="resolution" value="2.09 A"/>
    <property type="chains" value="A=879-1233"/>
</dbReference>
<dbReference type="PDB" id="8RO8">
    <property type="method" value="X-ray"/>
    <property type="resolution" value="1.90 A"/>
    <property type="chains" value="A=1-200, A=992-1233"/>
</dbReference>
<dbReference type="PDB" id="8RO9">
    <property type="method" value="X-ray"/>
    <property type="resolution" value="1.77 A"/>
    <property type="chains" value="A/C=1-200, A/C=992-1233"/>
</dbReference>
<dbReference type="PDB" id="8ROA">
    <property type="method" value="X-ray"/>
    <property type="resolution" value="2.44 A"/>
    <property type="chains" value="A/C=1-200, A/C=992-1233"/>
</dbReference>
<dbReference type="PDB" id="8ROB">
    <property type="method" value="X-ray"/>
    <property type="resolution" value="2.50 A"/>
    <property type="chains" value="A=1-200, A=992-1233"/>
</dbReference>
<dbReference type="PDB" id="8ROC">
    <property type="method" value="X-ray"/>
    <property type="resolution" value="1.85 A"/>
    <property type="chains" value="A=1-175, A=1057-1233"/>
</dbReference>
<dbReference type="PDB" id="8ROD">
    <property type="method" value="X-ray"/>
    <property type="resolution" value="1.50 A"/>
    <property type="chains" value="A=1-175, A=1057-1233"/>
</dbReference>
<dbReference type="PDB" id="8ROE">
    <property type="method" value="X-ray"/>
    <property type="resolution" value="1.36 A"/>
    <property type="chains" value="A=1-175, A=1057-1233"/>
</dbReference>
<dbReference type="PDB" id="8ROF">
    <property type="method" value="X-ray"/>
    <property type="resolution" value="1.65 A"/>
    <property type="chains" value="A=1-175, A=1057-1233"/>
</dbReference>
<dbReference type="PDB" id="8ROG">
    <property type="method" value="X-ray"/>
    <property type="resolution" value="1.94 A"/>
    <property type="chains" value="A=1-175, A=1057-1233"/>
</dbReference>
<dbReference type="PDBsum" id="6WG3"/>
<dbReference type="PDBsum" id="6WG4"/>
<dbReference type="PDBsum" id="6WG6"/>
<dbReference type="PDBsum" id="6WGE"/>
<dbReference type="PDBsum" id="7W1M"/>
<dbReference type="PDBsum" id="8P0A"/>
<dbReference type="PDBsum" id="8PQ5"/>
<dbReference type="PDBsum" id="8RO6"/>
<dbReference type="PDBsum" id="8RO7"/>
<dbReference type="PDBsum" id="8RO8"/>
<dbReference type="PDBsum" id="8RO9"/>
<dbReference type="PDBsum" id="8ROA"/>
<dbReference type="PDBsum" id="8ROB"/>
<dbReference type="PDBsum" id="8ROC"/>
<dbReference type="PDBsum" id="8ROD"/>
<dbReference type="PDBsum" id="8ROE"/>
<dbReference type="PDBsum" id="8ROF"/>
<dbReference type="PDBsum" id="8ROG"/>
<dbReference type="EMDB" id="EMD-17331"/>
<dbReference type="EMDB" id="EMD-17820"/>
<dbReference type="EMDB" id="EMD-21658"/>
<dbReference type="EMDB" id="EMD-21663"/>
<dbReference type="EMDB" id="EMD-32252"/>
<dbReference type="EMDB" id="EMD-4030"/>
<dbReference type="EMDB" id="EMD-4031"/>
<dbReference type="SMR" id="Q14683"/>
<dbReference type="BioGRID" id="113871">
    <property type="interactions" value="433"/>
</dbReference>
<dbReference type="ComplexPortal" id="CPX-5989">
    <property type="entry name" value="Nuclear mitotic cohesin complex, STAG1 variant"/>
</dbReference>
<dbReference type="ComplexPortal" id="CPX-5991">
    <property type="entry name" value="Nuclear mitotic cohesin complex, STAG2 variant"/>
</dbReference>
<dbReference type="CORUM" id="Q14683"/>
<dbReference type="DIP" id="DIP-30911N"/>
<dbReference type="FunCoup" id="Q14683">
    <property type="interactions" value="3063"/>
</dbReference>
<dbReference type="IntAct" id="Q14683">
    <property type="interactions" value="190"/>
</dbReference>
<dbReference type="MINT" id="Q14683"/>
<dbReference type="STRING" id="9606.ENSP00000323421"/>
<dbReference type="ChEMBL" id="CHEMBL4105747"/>
<dbReference type="DrugCentral" id="Q14683"/>
<dbReference type="GlyGen" id="Q14683">
    <property type="glycosylation" value="3 sites, 1 N-linked glycan (1 site), 1 O-linked glycan (2 sites)"/>
</dbReference>
<dbReference type="iPTMnet" id="Q14683"/>
<dbReference type="MetOSite" id="Q14683"/>
<dbReference type="PhosphoSitePlus" id="Q14683"/>
<dbReference type="SwissPalm" id="Q14683"/>
<dbReference type="BioMuta" id="SMC1A"/>
<dbReference type="DMDM" id="29336622"/>
<dbReference type="jPOST" id="Q14683"/>
<dbReference type="MassIVE" id="Q14683"/>
<dbReference type="PaxDb" id="9606-ENSP00000323421"/>
<dbReference type="PeptideAtlas" id="Q14683"/>
<dbReference type="ProteomicsDB" id="60117"/>
<dbReference type="Pumba" id="Q14683"/>
<dbReference type="Antibodypedia" id="491">
    <property type="antibodies" value="1040 antibodies from 44 providers"/>
</dbReference>
<dbReference type="DNASU" id="8243"/>
<dbReference type="Ensembl" id="ENST00000322213.9">
    <property type="protein sequence ID" value="ENSP00000323421.3"/>
    <property type="gene ID" value="ENSG00000072501.19"/>
</dbReference>
<dbReference type="GeneID" id="8243"/>
<dbReference type="KEGG" id="hsa:8243"/>
<dbReference type="MANE-Select" id="ENST00000322213.9">
    <property type="protein sequence ID" value="ENSP00000323421.3"/>
    <property type="RefSeq nucleotide sequence ID" value="NM_006306.4"/>
    <property type="RefSeq protein sequence ID" value="NP_006297.2"/>
</dbReference>
<dbReference type="UCSC" id="uc004dsg.4">
    <property type="organism name" value="human"/>
</dbReference>
<dbReference type="AGR" id="HGNC:11111"/>
<dbReference type="CTD" id="8243"/>
<dbReference type="DisGeNET" id="8243"/>
<dbReference type="GeneCards" id="SMC1A"/>
<dbReference type="GeneReviews" id="SMC1A"/>
<dbReference type="HGNC" id="HGNC:11111">
    <property type="gene designation" value="SMC1A"/>
</dbReference>
<dbReference type="HPA" id="ENSG00000072501">
    <property type="expression patterns" value="Low tissue specificity"/>
</dbReference>
<dbReference type="MalaCards" id="SMC1A"/>
<dbReference type="MIM" id="300040">
    <property type="type" value="gene"/>
</dbReference>
<dbReference type="MIM" id="300590">
    <property type="type" value="phenotype"/>
</dbReference>
<dbReference type="MIM" id="301044">
    <property type="type" value="phenotype"/>
</dbReference>
<dbReference type="neXtProt" id="NX_Q14683"/>
<dbReference type="OpenTargets" id="ENSG00000072501"/>
<dbReference type="Orphanet" id="3095">
    <property type="disease" value="Atypical Rett syndrome"/>
</dbReference>
<dbReference type="Orphanet" id="199">
    <property type="disease" value="Cornelia de Lange syndrome"/>
</dbReference>
<dbReference type="Orphanet" id="220386">
    <property type="disease" value="Semilobar holoprosencephaly"/>
</dbReference>
<dbReference type="PharmGKB" id="PA35961"/>
<dbReference type="VEuPathDB" id="HostDB:ENSG00000072501"/>
<dbReference type="eggNOG" id="KOG0018">
    <property type="taxonomic scope" value="Eukaryota"/>
</dbReference>
<dbReference type="GeneTree" id="ENSGT00940000155614"/>
<dbReference type="HOGENOM" id="CLU_001042_0_2_1"/>
<dbReference type="InParanoid" id="Q14683"/>
<dbReference type="OMA" id="KHMDFQR"/>
<dbReference type="OrthoDB" id="413649at2759"/>
<dbReference type="PAN-GO" id="Q14683">
    <property type="GO annotations" value="4 GO annotations based on evolutionary models"/>
</dbReference>
<dbReference type="PhylomeDB" id="Q14683"/>
<dbReference type="TreeFam" id="TF101156"/>
<dbReference type="PathwayCommons" id="Q14683"/>
<dbReference type="Reactome" id="R-HSA-1221632">
    <property type="pathway name" value="Meiotic synapsis"/>
</dbReference>
<dbReference type="Reactome" id="R-HSA-2467813">
    <property type="pathway name" value="Separation of Sister Chromatids"/>
</dbReference>
<dbReference type="Reactome" id="R-HSA-2468052">
    <property type="pathway name" value="Establishment of Sister Chromatid Cohesion"/>
</dbReference>
<dbReference type="Reactome" id="R-HSA-2470946">
    <property type="pathway name" value="Cohesin Loading onto Chromatin"/>
</dbReference>
<dbReference type="Reactome" id="R-HSA-2500257">
    <property type="pathway name" value="Resolution of Sister Chromatid Cohesion"/>
</dbReference>
<dbReference type="Reactome" id="R-HSA-3108214">
    <property type="pathway name" value="SUMOylation of DNA damage response and repair proteins"/>
</dbReference>
<dbReference type="Reactome" id="R-HSA-9018519">
    <property type="pathway name" value="Estrogen-dependent gene expression"/>
</dbReference>
<dbReference type="SignaLink" id="Q14683"/>
<dbReference type="SIGNOR" id="Q14683"/>
<dbReference type="BioGRID-ORCS" id="8243">
    <property type="hits" value="428 hits in 806 CRISPR screens"/>
</dbReference>
<dbReference type="CD-CODE" id="232F8A39">
    <property type="entry name" value="P-body"/>
</dbReference>
<dbReference type="CD-CODE" id="8C2F96ED">
    <property type="entry name" value="Centrosome"/>
</dbReference>
<dbReference type="CD-CODE" id="91857CE7">
    <property type="entry name" value="Nucleolus"/>
</dbReference>
<dbReference type="ChiTaRS" id="SMC1A">
    <property type="organism name" value="human"/>
</dbReference>
<dbReference type="GeneWiki" id="SMC1A"/>
<dbReference type="GenomeRNAi" id="8243"/>
<dbReference type="Pharos" id="Q14683">
    <property type="development level" value="Tchem"/>
</dbReference>
<dbReference type="PRO" id="PR:Q14683"/>
<dbReference type="Proteomes" id="UP000005640">
    <property type="component" value="Chromosome X"/>
</dbReference>
<dbReference type="RNAct" id="Q14683">
    <property type="molecule type" value="protein"/>
</dbReference>
<dbReference type="Bgee" id="ENSG00000072501">
    <property type="expression patterns" value="Expressed in sural nerve and 210 other cell types or tissues"/>
</dbReference>
<dbReference type="ExpressionAtlas" id="Q14683">
    <property type="expression patterns" value="baseline and differential"/>
</dbReference>
<dbReference type="GO" id="GO:0005694">
    <property type="term" value="C:chromosome"/>
    <property type="evidence" value="ECO:0000304"/>
    <property type="project" value="Reactome"/>
</dbReference>
<dbReference type="GO" id="GO:0000775">
    <property type="term" value="C:chromosome, centromeric region"/>
    <property type="evidence" value="ECO:0000304"/>
    <property type="project" value="Reactome"/>
</dbReference>
<dbReference type="GO" id="GO:0008278">
    <property type="term" value="C:cohesin complex"/>
    <property type="evidence" value="ECO:0000314"/>
    <property type="project" value="UniProtKB"/>
</dbReference>
<dbReference type="GO" id="GO:0000794">
    <property type="term" value="C:condensed nuclear chromosome"/>
    <property type="evidence" value="ECO:0000304"/>
    <property type="project" value="ProtInc"/>
</dbReference>
<dbReference type="GO" id="GO:0005829">
    <property type="term" value="C:cytosol"/>
    <property type="evidence" value="ECO:0000314"/>
    <property type="project" value="HPA"/>
</dbReference>
<dbReference type="GO" id="GO:0000776">
    <property type="term" value="C:kinetochore"/>
    <property type="evidence" value="ECO:0000314"/>
    <property type="project" value="UniProtKB"/>
</dbReference>
<dbReference type="GO" id="GO:0030893">
    <property type="term" value="C:meiotic cohesin complex"/>
    <property type="evidence" value="ECO:0000314"/>
    <property type="project" value="UniProtKB"/>
</dbReference>
<dbReference type="GO" id="GO:0030892">
    <property type="term" value="C:mitotic cohesin complex"/>
    <property type="evidence" value="ECO:0000353"/>
    <property type="project" value="ComplexPortal"/>
</dbReference>
<dbReference type="GO" id="GO:0097431">
    <property type="term" value="C:mitotic spindle pole"/>
    <property type="evidence" value="ECO:0000314"/>
    <property type="project" value="UniProtKB"/>
</dbReference>
<dbReference type="GO" id="GO:0016363">
    <property type="term" value="C:nuclear matrix"/>
    <property type="evidence" value="ECO:0000314"/>
    <property type="project" value="UniProtKB"/>
</dbReference>
<dbReference type="GO" id="GO:0005654">
    <property type="term" value="C:nucleoplasm"/>
    <property type="evidence" value="ECO:0000314"/>
    <property type="project" value="HPA"/>
</dbReference>
<dbReference type="GO" id="GO:0005634">
    <property type="term" value="C:nucleus"/>
    <property type="evidence" value="ECO:0000314"/>
    <property type="project" value="UniProtKB"/>
</dbReference>
<dbReference type="GO" id="GO:0005524">
    <property type="term" value="F:ATP binding"/>
    <property type="evidence" value="ECO:0007669"/>
    <property type="project" value="UniProtKB-KW"/>
</dbReference>
<dbReference type="GO" id="GO:0016887">
    <property type="term" value="F:ATP hydrolysis activity"/>
    <property type="evidence" value="ECO:0007669"/>
    <property type="project" value="InterPro"/>
</dbReference>
<dbReference type="GO" id="GO:0003682">
    <property type="term" value="F:chromatin binding"/>
    <property type="evidence" value="ECO:0000314"/>
    <property type="project" value="UniProtKB"/>
</dbReference>
<dbReference type="GO" id="GO:0003677">
    <property type="term" value="F:DNA binding"/>
    <property type="evidence" value="ECO:0000318"/>
    <property type="project" value="GO_Central"/>
</dbReference>
<dbReference type="GO" id="GO:0036033">
    <property type="term" value="F:mediator complex binding"/>
    <property type="evidence" value="ECO:0007669"/>
    <property type="project" value="Ensembl"/>
</dbReference>
<dbReference type="GO" id="GO:0046982">
    <property type="term" value="F:protein heterodimerization activity"/>
    <property type="evidence" value="ECO:0000353"/>
    <property type="project" value="UniProtKB"/>
</dbReference>
<dbReference type="GO" id="GO:0003723">
    <property type="term" value="F:RNA binding"/>
    <property type="evidence" value="ECO:0007005"/>
    <property type="project" value="UniProtKB"/>
</dbReference>
<dbReference type="GO" id="GO:0051301">
    <property type="term" value="P:cell division"/>
    <property type="evidence" value="ECO:0007669"/>
    <property type="project" value="UniProtKB-KW"/>
</dbReference>
<dbReference type="GO" id="GO:0006281">
    <property type="term" value="P:DNA repair"/>
    <property type="evidence" value="ECO:0000304"/>
    <property type="project" value="UniProtKB"/>
</dbReference>
<dbReference type="GO" id="GO:0034089">
    <property type="term" value="P:establishment of meiotic sister chromatid cohesion"/>
    <property type="evidence" value="ECO:0000303"/>
    <property type="project" value="ComplexPortal"/>
</dbReference>
<dbReference type="GO" id="GO:0034087">
    <property type="term" value="P:establishment of mitotic sister chromatid cohesion"/>
    <property type="evidence" value="ECO:0000303"/>
    <property type="project" value="ComplexPortal"/>
</dbReference>
<dbReference type="GO" id="GO:0051321">
    <property type="term" value="P:meiotic cell cycle"/>
    <property type="evidence" value="ECO:0000250"/>
    <property type="project" value="UniProtKB"/>
</dbReference>
<dbReference type="GO" id="GO:0007064">
    <property type="term" value="P:mitotic sister chromatid cohesion"/>
    <property type="evidence" value="ECO:0000304"/>
    <property type="project" value="UniProtKB"/>
</dbReference>
<dbReference type="GO" id="GO:0000070">
    <property type="term" value="P:mitotic sister chromatid segregation"/>
    <property type="evidence" value="ECO:0000304"/>
    <property type="project" value="UniProtKB"/>
</dbReference>
<dbReference type="GO" id="GO:0090307">
    <property type="term" value="P:mitotic spindle assembly"/>
    <property type="evidence" value="ECO:0000315"/>
    <property type="project" value="UniProtKB"/>
</dbReference>
<dbReference type="GO" id="GO:0072423">
    <property type="term" value="P:response to DNA damage checkpoint signaling"/>
    <property type="evidence" value="ECO:0000314"/>
    <property type="project" value="UniProtKB"/>
</dbReference>
<dbReference type="GO" id="GO:0009314">
    <property type="term" value="P:response to radiation"/>
    <property type="evidence" value="ECO:0000270"/>
    <property type="project" value="UniProtKB"/>
</dbReference>
<dbReference type="GO" id="GO:0007062">
    <property type="term" value="P:sister chromatid cohesion"/>
    <property type="evidence" value="ECO:0000315"/>
    <property type="project" value="BHF-UCL"/>
</dbReference>
<dbReference type="GO" id="GO:0035019">
    <property type="term" value="P:somatic stem cell population maintenance"/>
    <property type="evidence" value="ECO:0007669"/>
    <property type="project" value="Ensembl"/>
</dbReference>
<dbReference type="CDD" id="cd03275">
    <property type="entry name" value="ABC_SMC1_euk"/>
    <property type="match status" value="2"/>
</dbReference>
<dbReference type="FunFam" id="1.20.1060.20:FF:000001">
    <property type="entry name" value="Structural maintenance of chromosomes 1A"/>
    <property type="match status" value="1"/>
</dbReference>
<dbReference type="FunFam" id="3.40.50.300:FF:000564">
    <property type="entry name" value="Structural maintenance of chromosomes 1A"/>
    <property type="match status" value="1"/>
</dbReference>
<dbReference type="FunFam" id="3.30.70.1620:FF:000001">
    <property type="entry name" value="Structural maintenance of chromosomes 1B"/>
    <property type="match status" value="1"/>
</dbReference>
<dbReference type="FunFam" id="3.40.50.300:FF:000562">
    <property type="entry name" value="Structural maintenance of chromosomes protein"/>
    <property type="match status" value="1"/>
</dbReference>
<dbReference type="Gene3D" id="1.20.1060.20">
    <property type="match status" value="1"/>
</dbReference>
<dbReference type="Gene3D" id="3.30.70.1620">
    <property type="match status" value="1"/>
</dbReference>
<dbReference type="Gene3D" id="3.40.50.300">
    <property type="entry name" value="P-loop containing nucleotide triphosphate hydrolases"/>
    <property type="match status" value="2"/>
</dbReference>
<dbReference type="InterPro" id="IPR027417">
    <property type="entry name" value="P-loop_NTPase"/>
</dbReference>
<dbReference type="InterPro" id="IPR003395">
    <property type="entry name" value="RecF/RecN/SMC_N"/>
</dbReference>
<dbReference type="InterPro" id="IPR024704">
    <property type="entry name" value="SMC"/>
</dbReference>
<dbReference type="InterPro" id="IPR028468">
    <property type="entry name" value="Smc1_ABC"/>
</dbReference>
<dbReference type="InterPro" id="IPR010935">
    <property type="entry name" value="SMC_hinge"/>
</dbReference>
<dbReference type="InterPro" id="IPR036277">
    <property type="entry name" value="SMC_hinge_sf"/>
</dbReference>
<dbReference type="PANTHER" id="PTHR18937:SF170">
    <property type="entry name" value="STRUCTURAL MAINTENANCE OF CHROMOSOMES PROTEIN 1A"/>
    <property type="match status" value="1"/>
</dbReference>
<dbReference type="PANTHER" id="PTHR18937">
    <property type="entry name" value="STRUCTURAL MAINTENANCE OF CHROMOSOMES SMC FAMILY MEMBER"/>
    <property type="match status" value="1"/>
</dbReference>
<dbReference type="Pfam" id="PF06470">
    <property type="entry name" value="SMC_hinge"/>
    <property type="match status" value="1"/>
</dbReference>
<dbReference type="Pfam" id="PF02463">
    <property type="entry name" value="SMC_N"/>
    <property type="match status" value="1"/>
</dbReference>
<dbReference type="PIRSF" id="PIRSF005719">
    <property type="entry name" value="SMC"/>
    <property type="match status" value="1"/>
</dbReference>
<dbReference type="SMART" id="SM00968">
    <property type="entry name" value="SMC_hinge"/>
    <property type="match status" value="1"/>
</dbReference>
<dbReference type="SUPFAM" id="SSF52540">
    <property type="entry name" value="P-loop containing nucleoside triphosphate hydrolases"/>
    <property type="match status" value="1"/>
</dbReference>
<dbReference type="SUPFAM" id="SSF75553">
    <property type="entry name" value="Smc hinge domain"/>
    <property type="match status" value="1"/>
</dbReference>
<keyword id="KW-0002">3D-structure</keyword>
<keyword id="KW-0007">Acetylation</keyword>
<keyword id="KW-0067">ATP-binding</keyword>
<keyword id="KW-0131">Cell cycle</keyword>
<keyword id="KW-0132">Cell division</keyword>
<keyword id="KW-0137">Centromere</keyword>
<keyword id="KW-0158">Chromosome</keyword>
<keyword id="KW-0175">Coiled coil</keyword>
<keyword id="KW-0903">Direct protein sequencing</keyword>
<keyword id="KW-0225">Disease variant</keyword>
<keyword id="KW-0227">DNA damage</keyword>
<keyword id="KW-0234">DNA repair</keyword>
<keyword id="KW-0887">Epilepsy</keyword>
<keyword id="KW-0991">Intellectual disability</keyword>
<keyword id="KW-0995">Kinetochore</keyword>
<keyword id="KW-0469">Meiosis</keyword>
<keyword id="KW-0498">Mitosis</keyword>
<keyword id="KW-0547">Nucleotide-binding</keyword>
<keyword id="KW-0539">Nucleus</keyword>
<keyword id="KW-0597">Phosphoprotein</keyword>
<keyword id="KW-1267">Proteomics identification</keyword>
<keyword id="KW-1185">Reference proteome</keyword>
<keyword id="KW-0832">Ubl conjugation</keyword>
<reference key="1">
    <citation type="journal article" date="1995" name="Hum. Mol. Genet.">
        <title>The human SB1.8 gene (DXS423E) encodes a putative chromosome segregation protein conserved in lower eukaryotes and prokaryotes.</title>
        <authorList>
            <person name="Rocques P.J."/>
            <person name="Clark J."/>
            <person name="Ball S."/>
            <person name="Crew J."/>
            <person name="Gill S."/>
            <person name="Christodoulou Z."/>
            <person name="Borts R.H."/>
            <person name="Louis E.J."/>
            <person name="Davies K.E."/>
            <person name="Cooper C.S."/>
        </authorList>
    </citation>
    <scope>NUCLEOTIDE SEQUENCE [MRNA]</scope>
    <source>
        <tissue>Fibroblast</tissue>
    </source>
</reference>
<reference key="2">
    <citation type="journal article" date="1996" name="DNA Res.">
        <title>Prediction of the coding sequences of unidentified human genes. V. The coding sequences of 40 new genes (KIAA0161-KIAA0200) deduced by analysis of cDNA clones from human cell line KG-1.</title>
        <authorList>
            <person name="Nagase T."/>
            <person name="Seki N."/>
            <person name="Ishikawa K."/>
            <person name="Tanaka A."/>
            <person name="Nomura N."/>
        </authorList>
    </citation>
    <scope>NUCLEOTIDE SEQUENCE [LARGE SCALE MRNA]</scope>
    <source>
        <tissue>Bone marrow</tissue>
    </source>
</reference>
<reference key="3">
    <citation type="journal article" date="2002" name="DNA Res.">
        <title>Construction of expression-ready cDNA clones for KIAA genes: manual curation of 330 KIAA cDNA clones.</title>
        <authorList>
            <person name="Nakajima D."/>
            <person name="Okazaki N."/>
            <person name="Yamakawa H."/>
            <person name="Kikuno R."/>
            <person name="Ohara O."/>
            <person name="Nagase T."/>
        </authorList>
    </citation>
    <scope>SEQUENCE REVISION</scope>
</reference>
<reference key="4">
    <citation type="journal article" date="2005" name="Nature">
        <title>The DNA sequence of the human X chromosome.</title>
        <authorList>
            <person name="Ross M.T."/>
            <person name="Grafham D.V."/>
            <person name="Coffey A.J."/>
            <person name="Scherer S."/>
            <person name="McLay K."/>
            <person name="Muzny D."/>
            <person name="Platzer M."/>
            <person name="Howell G.R."/>
            <person name="Burrows C."/>
            <person name="Bird C.P."/>
            <person name="Frankish A."/>
            <person name="Lovell F.L."/>
            <person name="Howe K.L."/>
            <person name="Ashurst J.L."/>
            <person name="Fulton R.S."/>
            <person name="Sudbrak R."/>
            <person name="Wen G."/>
            <person name="Jones M.C."/>
            <person name="Hurles M.E."/>
            <person name="Andrews T.D."/>
            <person name="Scott C.E."/>
            <person name="Searle S."/>
            <person name="Ramser J."/>
            <person name="Whittaker A."/>
            <person name="Deadman R."/>
            <person name="Carter N.P."/>
            <person name="Hunt S.E."/>
            <person name="Chen R."/>
            <person name="Cree A."/>
            <person name="Gunaratne P."/>
            <person name="Havlak P."/>
            <person name="Hodgson A."/>
            <person name="Metzker M.L."/>
            <person name="Richards S."/>
            <person name="Scott G."/>
            <person name="Steffen D."/>
            <person name="Sodergren E."/>
            <person name="Wheeler D.A."/>
            <person name="Worley K.C."/>
            <person name="Ainscough R."/>
            <person name="Ambrose K.D."/>
            <person name="Ansari-Lari M.A."/>
            <person name="Aradhya S."/>
            <person name="Ashwell R.I."/>
            <person name="Babbage A.K."/>
            <person name="Bagguley C.L."/>
            <person name="Ballabio A."/>
            <person name="Banerjee R."/>
            <person name="Barker G.E."/>
            <person name="Barlow K.F."/>
            <person name="Barrett I.P."/>
            <person name="Bates K.N."/>
            <person name="Beare D.M."/>
            <person name="Beasley H."/>
            <person name="Beasley O."/>
            <person name="Beck A."/>
            <person name="Bethel G."/>
            <person name="Blechschmidt K."/>
            <person name="Brady N."/>
            <person name="Bray-Allen S."/>
            <person name="Bridgeman A.M."/>
            <person name="Brown A.J."/>
            <person name="Brown M.J."/>
            <person name="Bonnin D."/>
            <person name="Bruford E.A."/>
            <person name="Buhay C."/>
            <person name="Burch P."/>
            <person name="Burford D."/>
            <person name="Burgess J."/>
            <person name="Burrill W."/>
            <person name="Burton J."/>
            <person name="Bye J.M."/>
            <person name="Carder C."/>
            <person name="Carrel L."/>
            <person name="Chako J."/>
            <person name="Chapman J.C."/>
            <person name="Chavez D."/>
            <person name="Chen E."/>
            <person name="Chen G."/>
            <person name="Chen Y."/>
            <person name="Chen Z."/>
            <person name="Chinault C."/>
            <person name="Ciccodicola A."/>
            <person name="Clark S.Y."/>
            <person name="Clarke G."/>
            <person name="Clee C.M."/>
            <person name="Clegg S."/>
            <person name="Clerc-Blankenburg K."/>
            <person name="Clifford K."/>
            <person name="Cobley V."/>
            <person name="Cole C.G."/>
            <person name="Conquer J.S."/>
            <person name="Corby N."/>
            <person name="Connor R.E."/>
            <person name="David R."/>
            <person name="Davies J."/>
            <person name="Davis C."/>
            <person name="Davis J."/>
            <person name="Delgado O."/>
            <person name="Deshazo D."/>
            <person name="Dhami P."/>
            <person name="Ding Y."/>
            <person name="Dinh H."/>
            <person name="Dodsworth S."/>
            <person name="Draper H."/>
            <person name="Dugan-Rocha S."/>
            <person name="Dunham A."/>
            <person name="Dunn M."/>
            <person name="Durbin K.J."/>
            <person name="Dutta I."/>
            <person name="Eades T."/>
            <person name="Ellwood M."/>
            <person name="Emery-Cohen A."/>
            <person name="Errington H."/>
            <person name="Evans K.L."/>
            <person name="Faulkner L."/>
            <person name="Francis F."/>
            <person name="Frankland J."/>
            <person name="Fraser A.E."/>
            <person name="Galgoczy P."/>
            <person name="Gilbert J."/>
            <person name="Gill R."/>
            <person name="Gloeckner G."/>
            <person name="Gregory S.G."/>
            <person name="Gribble S."/>
            <person name="Griffiths C."/>
            <person name="Grocock R."/>
            <person name="Gu Y."/>
            <person name="Gwilliam R."/>
            <person name="Hamilton C."/>
            <person name="Hart E.A."/>
            <person name="Hawes A."/>
            <person name="Heath P.D."/>
            <person name="Heitmann K."/>
            <person name="Hennig S."/>
            <person name="Hernandez J."/>
            <person name="Hinzmann B."/>
            <person name="Ho S."/>
            <person name="Hoffs M."/>
            <person name="Howden P.J."/>
            <person name="Huckle E.J."/>
            <person name="Hume J."/>
            <person name="Hunt P.J."/>
            <person name="Hunt A.R."/>
            <person name="Isherwood J."/>
            <person name="Jacob L."/>
            <person name="Johnson D."/>
            <person name="Jones S."/>
            <person name="de Jong P.J."/>
            <person name="Joseph S.S."/>
            <person name="Keenan S."/>
            <person name="Kelly S."/>
            <person name="Kershaw J.K."/>
            <person name="Khan Z."/>
            <person name="Kioschis P."/>
            <person name="Klages S."/>
            <person name="Knights A.J."/>
            <person name="Kosiura A."/>
            <person name="Kovar-Smith C."/>
            <person name="Laird G.K."/>
            <person name="Langford C."/>
            <person name="Lawlor S."/>
            <person name="Leversha M."/>
            <person name="Lewis L."/>
            <person name="Liu W."/>
            <person name="Lloyd C."/>
            <person name="Lloyd D.M."/>
            <person name="Loulseged H."/>
            <person name="Loveland J.E."/>
            <person name="Lovell J.D."/>
            <person name="Lozado R."/>
            <person name="Lu J."/>
            <person name="Lyne R."/>
            <person name="Ma J."/>
            <person name="Maheshwari M."/>
            <person name="Matthews L.H."/>
            <person name="McDowall J."/>
            <person name="McLaren S."/>
            <person name="McMurray A."/>
            <person name="Meidl P."/>
            <person name="Meitinger T."/>
            <person name="Milne S."/>
            <person name="Miner G."/>
            <person name="Mistry S.L."/>
            <person name="Morgan M."/>
            <person name="Morris S."/>
            <person name="Mueller I."/>
            <person name="Mullikin J.C."/>
            <person name="Nguyen N."/>
            <person name="Nordsiek G."/>
            <person name="Nyakatura G."/>
            <person name="O'dell C.N."/>
            <person name="Okwuonu G."/>
            <person name="Palmer S."/>
            <person name="Pandian R."/>
            <person name="Parker D."/>
            <person name="Parrish J."/>
            <person name="Pasternak S."/>
            <person name="Patel D."/>
            <person name="Pearce A.V."/>
            <person name="Pearson D.M."/>
            <person name="Pelan S.E."/>
            <person name="Perez L."/>
            <person name="Porter K.M."/>
            <person name="Ramsey Y."/>
            <person name="Reichwald K."/>
            <person name="Rhodes S."/>
            <person name="Ridler K.A."/>
            <person name="Schlessinger D."/>
            <person name="Schueler M.G."/>
            <person name="Sehra H.K."/>
            <person name="Shaw-Smith C."/>
            <person name="Shen H."/>
            <person name="Sheridan E.M."/>
            <person name="Shownkeen R."/>
            <person name="Skuce C.D."/>
            <person name="Smith M.L."/>
            <person name="Sotheran E.C."/>
            <person name="Steingruber H.E."/>
            <person name="Steward C.A."/>
            <person name="Storey R."/>
            <person name="Swann R.M."/>
            <person name="Swarbreck D."/>
            <person name="Tabor P.E."/>
            <person name="Taudien S."/>
            <person name="Taylor T."/>
            <person name="Teague B."/>
            <person name="Thomas K."/>
            <person name="Thorpe A."/>
            <person name="Timms K."/>
            <person name="Tracey A."/>
            <person name="Trevanion S."/>
            <person name="Tromans A.C."/>
            <person name="d'Urso M."/>
            <person name="Verduzco D."/>
            <person name="Villasana D."/>
            <person name="Waldron L."/>
            <person name="Wall M."/>
            <person name="Wang Q."/>
            <person name="Warren J."/>
            <person name="Warry G.L."/>
            <person name="Wei X."/>
            <person name="West A."/>
            <person name="Whitehead S.L."/>
            <person name="Whiteley M.N."/>
            <person name="Wilkinson J.E."/>
            <person name="Willey D.L."/>
            <person name="Williams G."/>
            <person name="Williams L."/>
            <person name="Williamson A."/>
            <person name="Williamson H."/>
            <person name="Wilming L."/>
            <person name="Woodmansey R.L."/>
            <person name="Wray P.W."/>
            <person name="Yen J."/>
            <person name="Zhang J."/>
            <person name="Zhou J."/>
            <person name="Zoghbi H."/>
            <person name="Zorilla S."/>
            <person name="Buck D."/>
            <person name="Reinhardt R."/>
            <person name="Poustka A."/>
            <person name="Rosenthal A."/>
            <person name="Lehrach H."/>
            <person name="Meindl A."/>
            <person name="Minx P.J."/>
            <person name="Hillier L.W."/>
            <person name="Willard H.F."/>
            <person name="Wilson R.K."/>
            <person name="Waterston R.H."/>
            <person name="Rice C.M."/>
            <person name="Vaudin M."/>
            <person name="Coulson A."/>
            <person name="Nelson D.L."/>
            <person name="Weinstock G."/>
            <person name="Sulston J.E."/>
            <person name="Durbin R.M."/>
            <person name="Hubbard T."/>
            <person name="Gibbs R.A."/>
            <person name="Beck S."/>
            <person name="Rogers J."/>
            <person name="Bentley D.R."/>
        </authorList>
    </citation>
    <scope>NUCLEOTIDE SEQUENCE [LARGE SCALE GENOMIC DNA]</scope>
</reference>
<reference key="5">
    <citation type="journal article" date="2004" name="Genome Res.">
        <title>The status, quality, and expansion of the NIH full-length cDNA project: the Mammalian Gene Collection (MGC).</title>
        <authorList>
            <consortium name="The MGC Project Team"/>
        </authorList>
    </citation>
    <scope>NUCLEOTIDE SEQUENCE [LARGE SCALE MRNA]</scope>
    <source>
        <tissue>Brain</tissue>
    </source>
</reference>
<reference key="6">
    <citation type="journal article" date="2002" name="Genes Dev.">
        <title>SMC1 is a downstream effector in the ATM/NBS1 branch of the human S-phase checkpoint.</title>
        <authorList>
            <person name="Yazdi P.T."/>
            <person name="Wang Y."/>
            <person name="Zhao S."/>
            <person name="Patel N."/>
            <person name="Lee E.Y.-H.P."/>
            <person name="Qin J."/>
        </authorList>
    </citation>
    <scope>PROTEIN SEQUENCE OF 945-984</scope>
    <scope>FUNCTION</scope>
    <scope>INTERACTION WITH BRCA1</scope>
    <scope>PHOSPHORYLATION AT SER-957 AND SER-966</scope>
    <scope>MUTAGENESIS OF SER-957 AND SER-966</scope>
</reference>
<reference key="7">
    <citation type="journal article" date="1997" name="J. Biol. Chem.">
        <title>HEC binds to the seventh regulatory subunit of the 26 S proteasome and modulates the proteolysis of mitotic cyclins.</title>
        <authorList>
            <person name="Chen Y."/>
            <person name="Sharp Z.D."/>
            <person name="Lee W.-H."/>
        </authorList>
    </citation>
    <scope>INTERACTION WITH NDC80</scope>
</reference>
<reference key="8">
    <citation type="journal article" date="1999" name="Mol. Cell. Biol.">
        <title>Hec1p, an evolutionarily conserved coiled-coil protein, modulates chromosome segregation through interaction with SMC proteins.</title>
        <authorList>
            <person name="Zheng L."/>
            <person name="Chen Y."/>
            <person name="Lee W.-H."/>
        </authorList>
    </citation>
    <scope>INTERACTION WITH NDC80</scope>
</reference>
<reference key="9">
    <citation type="journal article" date="2000" name="J. Cell Biol.">
        <title>Characterization of vertebrate cohesin complexes and their regulation in prophase.</title>
        <authorList>
            <person name="Sumara I."/>
            <person name="Vorlaufer E."/>
            <person name="Gieffers C."/>
            <person name="Peters B.H."/>
            <person name="Peters J.-M."/>
        </authorList>
    </citation>
    <scope>IDENTIFICATION IN A COHESIN COMPLEX WITH SMC3; STAG1 OR STAG2</scope>
</reference>
<reference key="10">
    <citation type="journal article" date="2002" name="Chromosome Res.">
        <title>Localization of human SMC1 protein at kinetochores.</title>
        <authorList>
            <person name="Gregson H.C."/>
            <person name="Van Hooser A.A."/>
            <person name="Ball A.R. Jr."/>
            <person name="Brinkley B.R."/>
            <person name="Yokomori K."/>
        </authorList>
    </citation>
    <scope>SUBCELLULAR LOCATION DURING CELL CYCLE</scope>
</reference>
<reference key="11">
    <citation type="journal article" date="2003" name="Proc. Natl. Acad. Sci. U.S.A.">
        <title>MSH2 and ATR form a signaling module and regulate two branches of the damage response to DNA methylation.</title>
        <authorList>
            <person name="Wang Y."/>
            <person name="Qin J."/>
        </authorList>
    </citation>
    <scope>PHOSPHORYLATION AT SER-966</scope>
    <scope>MUTAGENESIS OF SER-966</scope>
</reference>
<reference key="12">
    <citation type="journal article" date="2005" name="Mol. Cell">
        <title>Sororin, a substrate of the anaphase-promoting complex, is required for sister chromatid cohesion in vertebrates.</title>
        <authorList>
            <person name="Rankin S."/>
            <person name="Ayad N.G."/>
            <person name="Kirschner M.W."/>
        </authorList>
    </citation>
    <scope>IDENTIFICATION IN A COMPLEX WITH CDCA5; SMC3; RAD21; PDS5A AND PDS5B</scope>
</reference>
<reference key="13">
    <citation type="journal article" date="2005" name="Mol. Cell">
        <authorList>
            <person name="Rankin S."/>
            <person name="Ayad N.G."/>
            <person name="Kirschner M.W."/>
        </authorList>
    </citation>
    <scope>ERRATUM OF PUBMED:15837422</scope>
</reference>
<reference key="14">
    <citation type="journal article" date="2007" name="Science">
        <title>ATM and ATR substrate analysis reveals extensive protein networks responsive to DNA damage.</title>
        <authorList>
            <person name="Matsuoka S."/>
            <person name="Ballif B.A."/>
            <person name="Smogorzewska A."/>
            <person name="McDonald E.R. III"/>
            <person name="Hurov K.E."/>
            <person name="Luo J."/>
            <person name="Bakalarski C.E."/>
            <person name="Zhao Z."/>
            <person name="Solimini N."/>
            <person name="Lerenthal Y."/>
            <person name="Shiloh Y."/>
            <person name="Gygi S.P."/>
            <person name="Elledge S.J."/>
        </authorList>
    </citation>
    <scope>PHOSPHORYLATION [LARGE SCALE ANALYSIS] AT SER-358; SER-360 AND SER-966</scope>
    <scope>IDENTIFICATION BY MASS SPECTROMETRY [LARGE SCALE ANALYSIS]</scope>
    <source>
        <tissue>Embryonic kidney</tissue>
    </source>
</reference>
<reference key="15">
    <citation type="journal article" date="2008" name="Proc. Natl. Acad. Sci. U.S.A.">
        <title>A quantitative atlas of mitotic phosphorylation.</title>
        <authorList>
            <person name="Dephoure N."/>
            <person name="Zhou C."/>
            <person name="Villen J."/>
            <person name="Beausoleil S.A."/>
            <person name="Bakalarski C.E."/>
            <person name="Elledge S.J."/>
            <person name="Gygi S.P."/>
        </authorList>
    </citation>
    <scope>PHOSPHORYLATION [LARGE SCALE ANALYSIS] AT SER-360; SER-957 AND SER-970</scope>
    <scope>IDENTIFICATION BY MASS SPECTROMETRY [LARGE SCALE ANALYSIS]</scope>
    <source>
        <tissue>Cervix carcinoma</tissue>
    </source>
</reference>
<reference key="16">
    <citation type="journal article" date="2009" name="Sci. Signal.">
        <title>Quantitative phosphoproteomic analysis of T cell receptor signaling reveals system-wide modulation of protein-protein interactions.</title>
        <authorList>
            <person name="Mayya V."/>
            <person name="Lundgren D.H."/>
            <person name="Hwang S.-I."/>
            <person name="Rezaul K."/>
            <person name="Wu L."/>
            <person name="Eng J.K."/>
            <person name="Rodionov V."/>
            <person name="Han D.K."/>
        </authorList>
    </citation>
    <scope>PHOSPHORYLATION [LARGE SCALE ANALYSIS] AT SER-957</scope>
    <scope>IDENTIFICATION BY MASS SPECTROMETRY [LARGE SCALE ANALYSIS]</scope>
    <source>
        <tissue>Leukemic T-cell</tissue>
    </source>
</reference>
<reference key="17">
    <citation type="journal article" date="2009" name="Science">
        <title>Lysine acetylation targets protein complexes and co-regulates major cellular functions.</title>
        <authorList>
            <person name="Choudhary C."/>
            <person name="Kumar C."/>
            <person name="Gnad F."/>
            <person name="Nielsen M.L."/>
            <person name="Rehman M."/>
            <person name="Walther T.C."/>
            <person name="Olsen J.V."/>
            <person name="Mann M."/>
        </authorList>
    </citation>
    <scope>ACETYLATION [LARGE SCALE ANALYSIS] AT LYS-648 AND LYS-713</scope>
    <scope>IDENTIFICATION BY MASS SPECTROMETRY [LARGE SCALE ANALYSIS]</scope>
</reference>
<reference key="18">
    <citation type="journal article" date="2010" name="Sci. Signal.">
        <title>Quantitative phosphoproteomics reveals widespread full phosphorylation site occupancy during mitosis.</title>
        <authorList>
            <person name="Olsen J.V."/>
            <person name="Vermeulen M."/>
            <person name="Santamaria A."/>
            <person name="Kumar C."/>
            <person name="Miller M.L."/>
            <person name="Jensen L.J."/>
            <person name="Gnad F."/>
            <person name="Cox J."/>
            <person name="Jensen T.S."/>
            <person name="Nigg E.A."/>
            <person name="Brunak S."/>
            <person name="Mann M."/>
        </authorList>
    </citation>
    <scope>PHOSPHORYLATION [LARGE SCALE ANALYSIS] AT SER-360; SER-957 AND SER-966</scope>
    <scope>IDENTIFICATION BY MASS SPECTROMETRY [LARGE SCALE ANALYSIS]</scope>
    <source>
        <tissue>Cervix carcinoma</tissue>
    </source>
</reference>
<reference key="19">
    <citation type="journal article" date="2011" name="BMC Syst. Biol.">
        <title>Initial characterization of the human central proteome.</title>
        <authorList>
            <person name="Burkard T.R."/>
            <person name="Planyavsky M."/>
            <person name="Kaupe I."/>
            <person name="Breitwieser F.P."/>
            <person name="Buerckstuemmer T."/>
            <person name="Bennett K.L."/>
            <person name="Superti-Furga G."/>
            <person name="Colinge J."/>
        </authorList>
    </citation>
    <scope>IDENTIFICATION BY MASS SPECTROMETRY [LARGE SCALE ANALYSIS]</scope>
</reference>
<reference key="20">
    <citation type="journal article" date="2011" name="Exp. Ther. Med.">
        <title>Functional interaction of BRCA1/ATM-associated BAAT1 with the DNA-PK catalytic subunit.</title>
        <authorList>
            <person name="So E.Y."/>
            <person name="Ouchi T."/>
        </authorList>
    </citation>
    <scope>INTERACTION WITH BRAT1</scope>
    <scope>PHOSPHORYLATION AT SER-966</scope>
</reference>
<reference key="21">
    <citation type="journal article" date="2011" name="Sci. Signal.">
        <title>System-wide temporal characterization of the proteome and phosphoproteome of human embryonic stem cell differentiation.</title>
        <authorList>
            <person name="Rigbolt K.T."/>
            <person name="Prokhorova T.A."/>
            <person name="Akimov V."/>
            <person name="Henningsen J."/>
            <person name="Johansen P.T."/>
            <person name="Kratchmarova I."/>
            <person name="Kassem M."/>
            <person name="Mann M."/>
            <person name="Olsen J.V."/>
            <person name="Blagoev B."/>
        </authorList>
    </citation>
    <scope>IDENTIFICATION BY MASS SPECTROMETRY [LARGE SCALE ANALYSIS]</scope>
</reference>
<reference key="22">
    <citation type="journal article" date="2012" name="Proc. Natl. Acad. Sci. U.S.A.">
        <title>In vitro loading of human cohesin on DNA by the human Scc2-Scc4 loader complex.</title>
        <authorList>
            <person name="Bermudez V.P."/>
            <person name="Farina A."/>
            <person name="Higashi T.L."/>
            <person name="Du F."/>
            <person name="Tappin I."/>
            <person name="Takahashi T.S."/>
            <person name="Hurwitz J."/>
        </authorList>
    </citation>
    <scope>IDENTIFICATION IN A COHESIN COMPLEX WITH SMC3; STAG1 AND RAD21</scope>
    <scope>INTERACTION WITH SMC3 AND HETERODIMER NIPB-MAU2</scope>
</reference>
<reference key="23">
    <citation type="journal article" date="2013" name="J. Proteome Res.">
        <title>Toward a comprehensive characterization of a human cancer cell phosphoproteome.</title>
        <authorList>
            <person name="Zhou H."/>
            <person name="Di Palma S."/>
            <person name="Preisinger C."/>
            <person name="Peng M."/>
            <person name="Polat A.N."/>
            <person name="Heck A.J."/>
            <person name="Mohammed S."/>
        </authorList>
    </citation>
    <scope>PHOSPHORYLATION [LARGE SCALE ANALYSIS] AT SER-360; SER-957 AND SER-962</scope>
    <scope>IDENTIFICATION BY MASS SPECTROMETRY [LARGE SCALE ANALYSIS]</scope>
    <source>
        <tissue>Cervix carcinoma</tissue>
        <tissue>Erythroleukemia</tissue>
    </source>
</reference>
<reference key="24">
    <citation type="journal article" date="2014" name="J. Proteomics">
        <title>An enzyme assisted RP-RPLC approach for in-depth analysis of human liver phosphoproteome.</title>
        <authorList>
            <person name="Bian Y."/>
            <person name="Song C."/>
            <person name="Cheng K."/>
            <person name="Dong M."/>
            <person name="Wang F."/>
            <person name="Huang J."/>
            <person name="Sun D."/>
            <person name="Wang L."/>
            <person name="Ye M."/>
            <person name="Zou H."/>
        </authorList>
    </citation>
    <scope>IDENTIFICATION BY MASS SPECTROMETRY [LARGE SCALE ANALYSIS]</scope>
    <source>
        <tissue>Liver</tissue>
    </source>
</reference>
<reference key="25">
    <citation type="journal article" date="2017" name="Epilepsia">
        <title>Heterozygous truncation mutations of the SMC1A gene cause a severe early onset epilepsy with cluster seizures in females: Detailed phenotyping of 10 new cases.</title>
        <authorList>
            <consortium name="DDD Study"/>
            <person name="Symonds J.D."/>
            <person name="Joss S."/>
            <person name="Metcalfe K.A."/>
            <person name="Somarathi S."/>
            <person name="Cruden J."/>
            <person name="Devlin A.M."/>
            <person name="Donaldson A."/>
            <person name="DiDonato N."/>
            <person name="Fitzpatrick D."/>
            <person name="Kaiser F.J."/>
            <person name="Lampe A.K."/>
            <person name="Lees M.M."/>
            <person name="McLellan A."/>
            <person name="Montgomery T."/>
            <person name="Mundada V."/>
            <person name="Nairn L."/>
            <person name="Sarkar A."/>
            <person name="Schallner J."/>
            <person name="Pozojevic J."/>
            <person name="Parenti I."/>
            <person name="Tan J."/>
            <person name="Turnpenny P."/>
            <person name="Whitehouse W.P."/>
            <person name="Zuberi S.M."/>
        </authorList>
    </citation>
    <scope>INVOLVEMENT IN DEE85</scope>
    <scope>VARIANTS DEE85 171-ARG--GLN-1233 DEL; 531-GLN--GLN-1233 DEL; 733-GLU--GLN-1233 DEL; 975-ARG--GLN-1233 DEL; 1039-GLN--GLN-1233 DEL AND 1049-ARG--GLN-1233 DEL</scope>
</reference>
<reference key="26">
    <citation type="journal article" date="2019" name="Elife">
        <title>Systematic identification of cancer cell vulnerabilities to natural killer cell-mediated immune surveillance.</title>
        <authorList>
            <person name="Pech M.F."/>
            <person name="Fong L.E."/>
            <person name="Villalta J.E."/>
            <person name="Chan L.J."/>
            <person name="Kharbanda S."/>
            <person name="O'Brien J.J."/>
            <person name="McAllister F.E."/>
            <person name="Firestone A.J."/>
            <person name="Jan C.H."/>
            <person name="Settleman J."/>
        </authorList>
    </citation>
    <scope>UBIQUITINATION</scope>
</reference>
<reference evidence="29 30 31 32" key="27">
    <citation type="journal article" date="2020" name="Science">
        <title>Cryo-EM structure of the human cohesin-NIPBL-DNA complex.</title>
        <authorList>
            <person name="Shi Z."/>
            <person name="Gao H."/>
            <person name="Bai X.C."/>
            <person name="Yu H."/>
        </authorList>
    </citation>
    <scope>STRUCTURE BY ELECTRON MICROSCOPY (3.90 ANGSTROMS)</scope>
    <scope>X-RAY CRYSTALLOGRAPHY (2.31 ANGSTROMS) OF 499-675</scope>
    <scope>IDENTIFICATION IN THE COHESIN COMPLEX</scope>
    <scope>INTERACTION WITH NIPBL</scope>
</reference>
<reference key="28">
    <citation type="journal article" date="2006" name="Nat. Genet.">
        <title>X-linked Cornelia de Lange syndrome owing to SMC1L1 mutations.</title>
        <authorList>
            <person name="Musio A."/>
            <person name="Selicorni A."/>
            <person name="Focarelli M.L."/>
            <person name="Gervasini C."/>
            <person name="Milani D."/>
            <person name="Russo S."/>
            <person name="Vezzoni P."/>
            <person name="Larizza L."/>
        </authorList>
    </citation>
    <scope>VARIANTS CDLS2 ALA-493 AND GLN-832 DEL</scope>
</reference>
<reference key="29">
    <citation type="journal article" date="2007" name="Am. J. Hum. Genet.">
        <title>Mutations in cohesin complex members SMC3 and SMC1A cause a mild variant of Cornelia de Lange syndrome with predominant mental retardation.</title>
        <authorList>
            <person name="Deardorff M.A."/>
            <person name="Kaur M."/>
            <person name="Yaeger D."/>
            <person name="Rampuria A."/>
            <person name="Korolev S."/>
            <person name="Pie J."/>
            <person name="Gil-Rodriguez C."/>
            <person name="Arnedo M."/>
            <person name="Loeys B."/>
            <person name="Kline A.D."/>
            <person name="Wilson M."/>
            <person name="Lillquist K."/>
            <person name="Siu V."/>
            <person name="Ramos F.J."/>
            <person name="Musio A."/>
            <person name="Jackson L.S."/>
            <person name="Dorsett D."/>
            <person name="Krantz I.D."/>
        </authorList>
    </citation>
    <scope>VARIANTS CDLS2 58-VAL--ARG-62 DEL; VAL-133; HIS-196; CYS-496; HIS-496; TRP-711; GLN-790 AND LEU-1122</scope>
</reference>
<reference key="30">
    <citation type="journal article" date="2007" name="Hum. Mutat.">
        <title>Incidence and clinical features of X-linked Cornelia de Lange syndrome due to SMC1L1 mutations.</title>
        <authorList>
            <person name="Borck G."/>
            <person name="Zarhrate M."/>
            <person name="Bonnefont J.-P."/>
            <person name="Munnich A."/>
            <person name="Cormier-Daire V."/>
            <person name="Colleaux L."/>
        </authorList>
    </citation>
    <scope>VARIANTS CDLS2 HIS-196 AND CYS-1085</scope>
</reference>
<reference key="31">
    <citation type="journal article" date="2009" name="Hum. Mol. Genet.">
        <title>Cornelia de Lange syndrome mutations in SMC1A or SMC3 affect binding to DNA.</title>
        <authorList>
            <person name="Revenkova E."/>
            <person name="Focarelli M.L."/>
            <person name="Susani L."/>
            <person name="Paulis M."/>
            <person name="Bassi M.T."/>
            <person name="Mannini L."/>
            <person name="Frattini A."/>
            <person name="Delia D."/>
            <person name="Krantz I."/>
            <person name="Vezzoni P."/>
            <person name="Jessberger R."/>
            <person name="Musio A."/>
        </authorList>
    </citation>
    <scope>CHARACTERIZATION OF VARIANTS CDLS2 ALA-493; CYS-496 AND HIS-496</scope>
    <scope>GENOMIC INSTABILITY OF CDLS CELL LINES TO IONIZING RADIATION</scope>
</reference>
<reference key="32">
    <citation type="journal article" date="2009" name="Hum. Mutat.">
        <title>SMC1A expression and mechanism of pathogenicity in probands with X-Linked Cornelia de Lange syndrome.</title>
        <authorList>
            <person name="Liu J."/>
            <person name="Feldman R."/>
            <person name="Zhang Z."/>
            <person name="Deardorff M.A."/>
            <person name="Haverfield E.V."/>
            <person name="Kaur M."/>
            <person name="Li J.R."/>
            <person name="Clark D."/>
            <person name="Kline A.D."/>
            <person name="Waggoner D.J."/>
            <person name="Das S."/>
            <person name="Jackson L.G."/>
            <person name="Krantz I.D."/>
        </authorList>
    </citation>
    <scope>VARIANTS CDLS2 58-VAL--ARG-62 DEL; VAL-133; LYS-141; HIS-196; LYS-268 DEL; SER-306 DEL; GLN-398; CYS-496; HIS-496; GLU-683 DEL; GLY-693; TRP-711; PHE-781; GLN-790; GLY-816; GLN-1049; LEU-1122 AND TRP-1123</scope>
</reference>
<reference key="33">
    <citation type="journal article" date="2010" name="Am. J. Med. Genet. A">
        <title>Mutations and variants in the cohesion factor genes NIPBL, SMC1A, and SMC3 in a cohort of 30 unrelated patients with Cornelia de Lange syndrome.</title>
        <authorList>
            <person name="Pie J."/>
            <person name="Gil-Rodriguez M.C."/>
            <person name="Ciero M."/>
            <person name="Lopez-Vinas E."/>
            <person name="Ribate M.P."/>
            <person name="Arnedo M."/>
            <person name="Deardorff M.A."/>
            <person name="Puisac B."/>
            <person name="Legarreta J."/>
            <person name="de Karam J.C."/>
            <person name="Rubio E."/>
            <person name="Bueno I."/>
            <person name="Baldellou A."/>
            <person name="Calvo M.T."/>
            <person name="Casals N."/>
            <person name="Olivares J.L."/>
            <person name="Losada A."/>
            <person name="Hegardt F.G."/>
            <person name="Krantz I.D."/>
            <person name="Gomez-Puertas P."/>
            <person name="Ramos F.J."/>
        </authorList>
    </citation>
    <scope>VARIANTS CDLS2 HIS-196; LYS-268 DEL AND GLN-711</scope>
</reference>
<reference key="34">
    <citation type="journal article" date="2010" name="Am. J. Med. Genet. A">
        <title>Hypertrophic cardiomyopathy in a girl with Cornelia de Lange syndrome due to mutation in SMC1A.</title>
        <authorList>
            <person name="Limongelli G."/>
            <person name="Russo S."/>
            <person name="Digilio M.C."/>
            <person name="Masciadri M."/>
            <person name="Pacileo G."/>
            <person name="Fratta F."/>
            <person name="Martone F."/>
            <person name="Maddaloni V."/>
            <person name="D'Alessandro R."/>
            <person name="Calabro P."/>
            <person name="Russo M.G."/>
            <person name="Calabro R."/>
            <person name="Larizza L."/>
        </authorList>
    </citation>
    <scope>VARIANT CDLS2 THR-784</scope>
</reference>
<reference key="35">
    <citation type="journal article" date="2013" name="Am. J. Med. Genet. A">
        <title>Cornelia de Lange individuals with new and recurrent SMC1A mutations enhance delineation of mutation repertoire and phenotypic spectrum.</title>
        <authorList>
            <person name="Gervasini C."/>
            <person name="Russo S."/>
            <person name="Cereda A."/>
            <person name="Parenti I."/>
            <person name="Masciadri M."/>
            <person name="Azzollini J."/>
            <person name="Melis D."/>
            <person name="Aravena T."/>
            <person name="Doray B."/>
            <person name="Ferrarini A."/>
            <person name="Garavelli L."/>
            <person name="Selicorni A."/>
            <person name="Larizza L."/>
        </authorList>
    </citation>
    <scope>VARIANTS CDLS2 58-VAL--ARG-62 DEL; GLY-398; MET-651; GLN-693; THR-784; GLN-790; THR-1166 AND PHE-1189</scope>
</reference>
<reference key="36">
    <citation type="journal article" date="2019" name="Brain">
        <title>Cohesin complex-associated holoprosencephaly.</title>
        <authorList>
            <person name="Kruszka P."/>
            <person name="Berger S.I."/>
            <person name="Casa V."/>
            <person name="Dekker M.R."/>
            <person name="Gaesser J."/>
            <person name="Weiss K."/>
            <person name="Martinez A.F."/>
            <person name="Murdock D.R."/>
            <person name="Louie R.J."/>
            <person name="Prijoles E.J."/>
            <person name="Lichty A.W."/>
            <person name="Brouwer O.F."/>
            <person name="Zonneveld-Huijssoon E."/>
            <person name="Stephan M.J."/>
            <person name="Hogue J."/>
            <person name="Hu P."/>
            <person name="Tanima-Nagai M."/>
            <person name="Everson J.L."/>
            <person name="Prasad C."/>
            <person name="Cereda A."/>
            <person name="Iascone M."/>
            <person name="Schreiber A."/>
            <person name="Zurcher V."/>
            <person name="Corsten-Janssen N."/>
            <person name="Escobar L."/>
            <person name="Clegg N.J."/>
            <person name="Delgado M.R."/>
            <person name="Hajirnis O."/>
            <person name="Balasubramanian M."/>
            <person name="Kayserili H."/>
            <person name="Deardorff M."/>
            <person name="Poot R.A."/>
            <person name="Wendt K.S."/>
            <person name="Lipinski R.J."/>
            <person name="Muenke M."/>
        </authorList>
    </citation>
    <scope>VARIANTS DEE85 499-ARG--GLN-1233 DEL AND GLY-895</scope>
</reference>